<feature type="chain" id="PRO_1000130780" description="RNase adapter protein RapZ">
    <location>
        <begin position="1"/>
        <end position="284"/>
    </location>
</feature>
<feature type="region of interest" description="RNA-binding" evidence="1">
    <location>
        <begin position="266"/>
        <end position="284"/>
    </location>
</feature>
<feature type="binding site" evidence="1">
    <location>
        <begin position="8"/>
        <end position="15"/>
    </location>
    <ligand>
        <name>ATP</name>
        <dbReference type="ChEBI" id="CHEBI:30616"/>
    </ligand>
</feature>
<feature type="binding site" evidence="1">
    <location>
        <begin position="56"/>
        <end position="59"/>
    </location>
    <ligand>
        <name>GTP</name>
        <dbReference type="ChEBI" id="CHEBI:37565"/>
    </ligand>
</feature>
<reference key="1">
    <citation type="journal article" date="2011" name="J. Bacteriol.">
        <title>Comparative genomics of 28 Salmonella enterica isolates: evidence for CRISPR-mediated adaptive sublineage evolution.</title>
        <authorList>
            <person name="Fricke W.F."/>
            <person name="Mammel M.K."/>
            <person name="McDermott P.F."/>
            <person name="Tartera C."/>
            <person name="White D.G."/>
            <person name="Leclerc J.E."/>
            <person name="Ravel J."/>
            <person name="Cebula T.A."/>
        </authorList>
    </citation>
    <scope>NUCLEOTIDE SEQUENCE [LARGE SCALE GENOMIC DNA]</scope>
    <source>
        <strain>SL254</strain>
    </source>
</reference>
<protein>
    <recommendedName>
        <fullName evidence="1">RNase adapter protein RapZ</fullName>
    </recommendedName>
</protein>
<evidence type="ECO:0000255" key="1">
    <source>
        <dbReference type="HAMAP-Rule" id="MF_00636"/>
    </source>
</evidence>
<sequence>MVLMIVSGRSGSGKSVALRALEDMGFYCVDNLPVVLLPDLARTLADRQISAAVSIDVRNMPESPEIFEQAMNNLPGAFSPQLLFLDADRNTLIRRYSDTRRLHPLSSKNLSLESAIDKESDLLEPLRSRADLIVDTSEMSVHELAEMLRTRLLGKRERELTMVFESFGFKHGIPIDADYVFDVRFLPNPHWDPKLRPMTGLDKPVAAFLDRHTEVHNFIYQTRSYLELWLPMLETNNRSYLTVAIGCTGGKHRSVYIAEQLADYFRSRGKNVQSRHRTLEKRKT</sequence>
<proteinExistence type="inferred from homology"/>
<accession>B4T736</accession>
<gene>
    <name evidence="1" type="primary">rapZ</name>
    <name type="ordered locus">SNSL254_A3584</name>
</gene>
<name>RAPZ_SALNS</name>
<dbReference type="EMBL" id="CP001113">
    <property type="protein sequence ID" value="ACF61593.1"/>
    <property type="molecule type" value="Genomic_DNA"/>
</dbReference>
<dbReference type="RefSeq" id="WP_000243749.1">
    <property type="nucleotide sequence ID" value="NZ_CCMR01000001.1"/>
</dbReference>
<dbReference type="SMR" id="B4T736"/>
<dbReference type="KEGG" id="see:SNSL254_A3584"/>
<dbReference type="HOGENOM" id="CLU_059558_1_1_6"/>
<dbReference type="Proteomes" id="UP000008824">
    <property type="component" value="Chromosome"/>
</dbReference>
<dbReference type="GO" id="GO:0005524">
    <property type="term" value="F:ATP binding"/>
    <property type="evidence" value="ECO:0007669"/>
    <property type="project" value="UniProtKB-UniRule"/>
</dbReference>
<dbReference type="GO" id="GO:0005525">
    <property type="term" value="F:GTP binding"/>
    <property type="evidence" value="ECO:0007669"/>
    <property type="project" value="UniProtKB-UniRule"/>
</dbReference>
<dbReference type="GO" id="GO:0003723">
    <property type="term" value="F:RNA binding"/>
    <property type="evidence" value="ECO:0007669"/>
    <property type="project" value="UniProtKB-KW"/>
</dbReference>
<dbReference type="Gene3D" id="3.40.50.300">
    <property type="entry name" value="P-loop containing nucleotide triphosphate hydrolases"/>
    <property type="match status" value="1"/>
</dbReference>
<dbReference type="HAMAP" id="MF_00636">
    <property type="entry name" value="RapZ_like"/>
    <property type="match status" value="1"/>
</dbReference>
<dbReference type="InterPro" id="IPR027417">
    <property type="entry name" value="P-loop_NTPase"/>
</dbReference>
<dbReference type="InterPro" id="IPR005337">
    <property type="entry name" value="RapZ-like"/>
</dbReference>
<dbReference type="InterPro" id="IPR053930">
    <property type="entry name" value="RapZ-like_N"/>
</dbReference>
<dbReference type="InterPro" id="IPR053931">
    <property type="entry name" value="RapZ_C"/>
</dbReference>
<dbReference type="NCBIfam" id="NF003828">
    <property type="entry name" value="PRK05416.1"/>
    <property type="match status" value="1"/>
</dbReference>
<dbReference type="PANTHER" id="PTHR30448">
    <property type="entry name" value="RNASE ADAPTER PROTEIN RAPZ"/>
    <property type="match status" value="1"/>
</dbReference>
<dbReference type="PANTHER" id="PTHR30448:SF0">
    <property type="entry name" value="RNASE ADAPTER PROTEIN RAPZ"/>
    <property type="match status" value="1"/>
</dbReference>
<dbReference type="Pfam" id="PF22740">
    <property type="entry name" value="PapZ_C"/>
    <property type="match status" value="1"/>
</dbReference>
<dbReference type="Pfam" id="PF03668">
    <property type="entry name" value="RapZ-like_N"/>
    <property type="match status" value="1"/>
</dbReference>
<dbReference type="PIRSF" id="PIRSF005052">
    <property type="entry name" value="P-loopkin"/>
    <property type="match status" value="1"/>
</dbReference>
<dbReference type="SUPFAM" id="SSF52540">
    <property type="entry name" value="P-loop containing nucleoside triphosphate hydrolases"/>
    <property type="match status" value="1"/>
</dbReference>
<organism>
    <name type="scientific">Salmonella newport (strain SL254)</name>
    <dbReference type="NCBI Taxonomy" id="423368"/>
    <lineage>
        <taxon>Bacteria</taxon>
        <taxon>Pseudomonadati</taxon>
        <taxon>Pseudomonadota</taxon>
        <taxon>Gammaproteobacteria</taxon>
        <taxon>Enterobacterales</taxon>
        <taxon>Enterobacteriaceae</taxon>
        <taxon>Salmonella</taxon>
    </lineage>
</organism>
<comment type="function">
    <text evidence="1">Modulates the synthesis of GlmS, by affecting the processing and stability of the regulatory small RNA GlmZ. When glucosamine-6-phosphate (GlcN6P) concentrations are high in the cell, RapZ binds GlmZ and targets it to cleavage by RNase E. Consequently, GlmZ is inactivated and unable to activate GlmS synthesis. Under low GlcN6P concentrations, RapZ is sequestered and inactivated by an other regulatory small RNA, GlmY, preventing GlmZ degradation and leading to synthesis of GlmS.</text>
</comment>
<comment type="subunit">
    <text evidence="1">Homotrimer.</text>
</comment>
<comment type="similarity">
    <text evidence="1">Belongs to the RapZ-like family. RapZ subfamily.</text>
</comment>
<keyword id="KW-0067">ATP-binding</keyword>
<keyword id="KW-0342">GTP-binding</keyword>
<keyword id="KW-0547">Nucleotide-binding</keyword>
<keyword id="KW-0694">RNA-binding</keyword>